<proteinExistence type="inferred from homology"/>
<comment type="subcellular location">
    <subcellularLocation>
        <location evidence="1">Cell membrane</location>
        <topology evidence="1">Lipid-anchor</topology>
    </subcellularLocation>
</comment>
<comment type="similarity">
    <text evidence="1">Belongs to the LpqB lipoprotein family.</text>
</comment>
<dbReference type="EMBL" id="BA000030">
    <property type="protein sequence ID" value="BAC72777.1"/>
    <property type="molecule type" value="Genomic_DNA"/>
</dbReference>
<dbReference type="RefSeq" id="WP_010986470.1">
    <property type="nucleotide sequence ID" value="NZ_JZJK01000072.1"/>
</dbReference>
<dbReference type="GeneID" id="41542148"/>
<dbReference type="KEGG" id="sma:SAVERM_5065"/>
<dbReference type="eggNOG" id="COG0823">
    <property type="taxonomic scope" value="Bacteria"/>
</dbReference>
<dbReference type="HOGENOM" id="CLU_032207_0_1_11"/>
<dbReference type="OrthoDB" id="3226781at2"/>
<dbReference type="Proteomes" id="UP000000428">
    <property type="component" value="Chromosome"/>
</dbReference>
<dbReference type="GO" id="GO:0005886">
    <property type="term" value="C:plasma membrane"/>
    <property type="evidence" value="ECO:0007669"/>
    <property type="project" value="UniProtKB-SubCell"/>
</dbReference>
<dbReference type="Gene3D" id="2.120.10.30">
    <property type="entry name" value="TolB, C-terminal domain"/>
    <property type="match status" value="1"/>
</dbReference>
<dbReference type="HAMAP" id="MF_01373">
    <property type="entry name" value="LpqB_lipoprot"/>
    <property type="match status" value="1"/>
</dbReference>
<dbReference type="InterPro" id="IPR011042">
    <property type="entry name" value="6-blade_b-propeller_TolB-like"/>
</dbReference>
<dbReference type="InterPro" id="IPR019606">
    <property type="entry name" value="GerMN"/>
</dbReference>
<dbReference type="InterPro" id="IPR023959">
    <property type="entry name" value="Lipoprotein_LpqB"/>
</dbReference>
<dbReference type="InterPro" id="IPR018910">
    <property type="entry name" value="Lipoprotein_LpqB_C"/>
</dbReference>
<dbReference type="Pfam" id="PF10646">
    <property type="entry name" value="Germane"/>
    <property type="match status" value="1"/>
</dbReference>
<dbReference type="Pfam" id="PF10647">
    <property type="entry name" value="Gmad1"/>
    <property type="match status" value="1"/>
</dbReference>
<dbReference type="SMART" id="SM00909">
    <property type="entry name" value="Germane"/>
    <property type="match status" value="1"/>
</dbReference>
<dbReference type="SUPFAM" id="SSF82171">
    <property type="entry name" value="DPP6 N-terminal domain-like"/>
    <property type="match status" value="1"/>
</dbReference>
<gene>
    <name evidence="1" type="primary">lpqB</name>
    <name type="ordered locus">SAV_5065</name>
</gene>
<name>LPQB_STRAW</name>
<evidence type="ECO:0000255" key="1">
    <source>
        <dbReference type="HAMAP-Rule" id="MF_01373"/>
    </source>
</evidence>
<keyword id="KW-1003">Cell membrane</keyword>
<keyword id="KW-0449">Lipoprotein</keyword>
<keyword id="KW-0472">Membrane</keyword>
<keyword id="KW-0564">Palmitate</keyword>
<keyword id="KW-1185">Reference proteome</keyword>
<keyword id="KW-0732">Signal</keyword>
<sequence length="610" mass="65013">MGAEGGGRRRALRLGAYVGCGAVLLTGCASMPDSGDLRGVESTPRQDAQVRVFAMPPREDAAPAEIVQGFLEALTSDDPQYETAREYLTGDASKQWRPYKSTTVLADGPNPEPERTRNRETGDDFAYTLTGSRLAKVDGQHAYAPDSGDYTGTVHLTLQRKTGQWRIDALPQGVVMGKSDFERNYKSVNKYYFASNVPAGTSGQLGTVADPVYVRGKVDPVTAMVTELLKGPTRWLAPVARSSFPTDTGLKKGVTSLAPDDQNKLTVPLNKKADRVGRAQCTKMAAQLLFTLKDLTPTGVDEVELQRSDGSTLCDLGEAEAESIASHGTGKSGEYEYFIDGEQRLVRLSGSSNGKDPDPVPGALGEGAKKLRAAAVSRDEVTAAGVSFDGSSLYVGSLVSGASLGEAVVHSAGTTEKDRLTTPSWDGGGDLWVADRDPAKSRLLLLQKGSGEPLEVRTPRLDGRIDAVRVAADGVRIALIVERDGKTSLQIGRIERETKADERADVSILELHSVTPQLEEVTAMSWAGDSRLVVVGREKGGVQQMRYVQVDGSTPSGSAPASLTGVQQIAASEDERLPLVAYSEDGIVRLSSGAQWQKVMKEGTAPVYPG</sequence>
<protein>
    <recommendedName>
        <fullName evidence="1">Lipoprotein LpqB</fullName>
    </recommendedName>
</protein>
<organism>
    <name type="scientific">Streptomyces avermitilis (strain ATCC 31267 / DSM 46492 / JCM 5070 / NBRC 14893 / NCIMB 12804 / NRRL 8165 / MA-4680)</name>
    <dbReference type="NCBI Taxonomy" id="227882"/>
    <lineage>
        <taxon>Bacteria</taxon>
        <taxon>Bacillati</taxon>
        <taxon>Actinomycetota</taxon>
        <taxon>Actinomycetes</taxon>
        <taxon>Kitasatosporales</taxon>
        <taxon>Streptomycetaceae</taxon>
        <taxon>Streptomyces</taxon>
    </lineage>
</organism>
<feature type="signal peptide" evidence="1">
    <location>
        <begin position="1"/>
        <end position="27"/>
    </location>
</feature>
<feature type="chain" id="PRO_0000286729" description="Lipoprotein LpqB">
    <location>
        <begin position="28"/>
        <end position="610"/>
    </location>
</feature>
<feature type="lipid moiety-binding region" description="N-palmitoyl cysteine" evidence="1">
    <location>
        <position position="28"/>
    </location>
</feature>
<feature type="lipid moiety-binding region" description="S-diacylglycerol cysteine" evidence="1">
    <location>
        <position position="28"/>
    </location>
</feature>
<reference key="1">
    <citation type="journal article" date="2001" name="Proc. Natl. Acad. Sci. U.S.A.">
        <title>Genome sequence of an industrial microorganism Streptomyces avermitilis: deducing the ability of producing secondary metabolites.</title>
        <authorList>
            <person name="Omura S."/>
            <person name="Ikeda H."/>
            <person name="Ishikawa J."/>
            <person name="Hanamoto A."/>
            <person name="Takahashi C."/>
            <person name="Shinose M."/>
            <person name="Takahashi Y."/>
            <person name="Horikawa H."/>
            <person name="Nakazawa H."/>
            <person name="Osonoe T."/>
            <person name="Kikuchi H."/>
            <person name="Shiba T."/>
            <person name="Sakaki Y."/>
            <person name="Hattori M."/>
        </authorList>
    </citation>
    <scope>NUCLEOTIDE SEQUENCE [LARGE SCALE GENOMIC DNA]</scope>
    <source>
        <strain>ATCC 31267 / DSM 46492 / JCM 5070 / NBRC 14893 / NCIMB 12804 / NRRL 8165 / MA-4680</strain>
    </source>
</reference>
<reference key="2">
    <citation type="journal article" date="2003" name="Nat. Biotechnol.">
        <title>Complete genome sequence and comparative analysis of the industrial microorganism Streptomyces avermitilis.</title>
        <authorList>
            <person name="Ikeda H."/>
            <person name="Ishikawa J."/>
            <person name="Hanamoto A."/>
            <person name="Shinose M."/>
            <person name="Kikuchi H."/>
            <person name="Shiba T."/>
            <person name="Sakaki Y."/>
            <person name="Hattori M."/>
            <person name="Omura S."/>
        </authorList>
    </citation>
    <scope>NUCLEOTIDE SEQUENCE [LARGE SCALE GENOMIC DNA]</scope>
    <source>
        <strain>ATCC 31267 / DSM 46492 / JCM 5070 / NBRC 14893 / NCIMB 12804 / NRRL 8165 / MA-4680</strain>
    </source>
</reference>
<accession>Q82DB7</accession>